<reference key="1">
    <citation type="journal article" date="2000" name="Nat. Genet.">
        <title>A putative pheromone receptor gene expressed in human olfactory mucosa.</title>
        <authorList>
            <person name="Rodriguez I."/>
            <person name="Greer C.A."/>
            <person name="Mok M.Y."/>
            <person name="Mombaerts P."/>
        </authorList>
    </citation>
    <scope>NUCLEOTIDE SEQUENCE [MRNA]</scope>
    <scope>TISSUE SPECIFICITY</scope>
    <scope>VARIANTS PHE-241 AND ASP-269</scope>
</reference>
<reference key="2">
    <citation type="submission" date="2000-09" db="EMBL/GenBank/DDBJ databases">
        <title>Human pheromone receptor ortholog subtype I member 1.</title>
        <authorList>
            <person name="Holloway J."/>
            <person name="Lofton-Day C."/>
            <person name="Lok S."/>
        </authorList>
    </citation>
    <scope>NUCLEOTIDE SEQUENCE [MRNA]</scope>
</reference>
<reference key="3">
    <citation type="journal article" date="2003" name="Proc. Natl. Acad. Sci. U.S.A.">
        <title>Evolutionary deterioration of the vomeronasal pheromone transduction pathway in catarrhine primates.</title>
        <authorList>
            <person name="Zhang J."/>
            <person name="Webb D.M."/>
        </authorList>
    </citation>
    <scope>NUCLEOTIDE SEQUENCE [GENOMIC DNA]</scope>
    <scope>VARIANTS THR-139; PHE-241 AND ASP-269</scope>
</reference>
<reference key="4">
    <citation type="journal article" date="2004" name="Nat. Genet.">
        <title>Complete sequencing and characterization of 21,243 full-length human cDNAs.</title>
        <authorList>
            <person name="Ota T."/>
            <person name="Suzuki Y."/>
            <person name="Nishikawa T."/>
            <person name="Otsuki T."/>
            <person name="Sugiyama T."/>
            <person name="Irie R."/>
            <person name="Wakamatsu A."/>
            <person name="Hayashi K."/>
            <person name="Sato H."/>
            <person name="Nagai K."/>
            <person name="Kimura K."/>
            <person name="Makita H."/>
            <person name="Sekine M."/>
            <person name="Obayashi M."/>
            <person name="Nishi T."/>
            <person name="Shibahara T."/>
            <person name="Tanaka T."/>
            <person name="Ishii S."/>
            <person name="Yamamoto J."/>
            <person name="Saito K."/>
            <person name="Kawai Y."/>
            <person name="Isono Y."/>
            <person name="Nakamura Y."/>
            <person name="Nagahari K."/>
            <person name="Murakami K."/>
            <person name="Yasuda T."/>
            <person name="Iwayanagi T."/>
            <person name="Wagatsuma M."/>
            <person name="Shiratori A."/>
            <person name="Sudo H."/>
            <person name="Hosoiri T."/>
            <person name="Kaku Y."/>
            <person name="Kodaira H."/>
            <person name="Kondo H."/>
            <person name="Sugawara M."/>
            <person name="Takahashi M."/>
            <person name="Kanda K."/>
            <person name="Yokoi T."/>
            <person name="Furuya T."/>
            <person name="Kikkawa E."/>
            <person name="Omura Y."/>
            <person name="Abe K."/>
            <person name="Kamihara K."/>
            <person name="Katsuta N."/>
            <person name="Sato K."/>
            <person name="Tanikawa M."/>
            <person name="Yamazaki M."/>
            <person name="Ninomiya K."/>
            <person name="Ishibashi T."/>
            <person name="Yamashita H."/>
            <person name="Murakawa K."/>
            <person name="Fujimori K."/>
            <person name="Tanai H."/>
            <person name="Kimata M."/>
            <person name="Watanabe M."/>
            <person name="Hiraoka S."/>
            <person name="Chiba Y."/>
            <person name="Ishida S."/>
            <person name="Ono Y."/>
            <person name="Takiguchi S."/>
            <person name="Watanabe S."/>
            <person name="Yosida M."/>
            <person name="Hotuta T."/>
            <person name="Kusano J."/>
            <person name="Kanehori K."/>
            <person name="Takahashi-Fujii A."/>
            <person name="Hara H."/>
            <person name="Tanase T.-O."/>
            <person name="Nomura Y."/>
            <person name="Togiya S."/>
            <person name="Komai F."/>
            <person name="Hara R."/>
            <person name="Takeuchi K."/>
            <person name="Arita M."/>
            <person name="Imose N."/>
            <person name="Musashino K."/>
            <person name="Yuuki H."/>
            <person name="Oshima A."/>
            <person name="Sasaki N."/>
            <person name="Aotsuka S."/>
            <person name="Yoshikawa Y."/>
            <person name="Matsunawa H."/>
            <person name="Ichihara T."/>
            <person name="Shiohata N."/>
            <person name="Sano S."/>
            <person name="Moriya S."/>
            <person name="Momiyama H."/>
            <person name="Satoh N."/>
            <person name="Takami S."/>
            <person name="Terashima Y."/>
            <person name="Suzuki O."/>
            <person name="Nakagawa S."/>
            <person name="Senoh A."/>
            <person name="Mizoguchi H."/>
            <person name="Goto Y."/>
            <person name="Shimizu F."/>
            <person name="Wakebe H."/>
            <person name="Hishigaki H."/>
            <person name="Watanabe T."/>
            <person name="Sugiyama A."/>
            <person name="Takemoto M."/>
            <person name="Kawakami B."/>
            <person name="Yamazaki M."/>
            <person name="Watanabe K."/>
            <person name="Kumagai A."/>
            <person name="Itakura S."/>
            <person name="Fukuzumi Y."/>
            <person name="Fujimori Y."/>
            <person name="Komiyama M."/>
            <person name="Tashiro H."/>
            <person name="Tanigami A."/>
            <person name="Fujiwara T."/>
            <person name="Ono T."/>
            <person name="Yamada K."/>
            <person name="Fujii Y."/>
            <person name="Ozaki K."/>
            <person name="Hirao M."/>
            <person name="Ohmori Y."/>
            <person name="Kawabata A."/>
            <person name="Hikiji T."/>
            <person name="Kobatake N."/>
            <person name="Inagaki H."/>
            <person name="Ikema Y."/>
            <person name="Okamoto S."/>
            <person name="Okitani R."/>
            <person name="Kawakami T."/>
            <person name="Noguchi S."/>
            <person name="Itoh T."/>
            <person name="Shigeta K."/>
            <person name="Senba T."/>
            <person name="Matsumura K."/>
            <person name="Nakajima Y."/>
            <person name="Mizuno T."/>
            <person name="Morinaga M."/>
            <person name="Sasaki M."/>
            <person name="Togashi T."/>
            <person name="Oyama M."/>
            <person name="Hata H."/>
            <person name="Watanabe M."/>
            <person name="Komatsu T."/>
            <person name="Mizushima-Sugano J."/>
            <person name="Satoh T."/>
            <person name="Shirai Y."/>
            <person name="Takahashi Y."/>
            <person name="Nakagawa K."/>
            <person name="Okumura K."/>
            <person name="Nagase T."/>
            <person name="Nomura N."/>
            <person name="Kikuchi H."/>
            <person name="Masuho Y."/>
            <person name="Yamashita R."/>
            <person name="Nakai K."/>
            <person name="Yada T."/>
            <person name="Nakamura Y."/>
            <person name="Ohara O."/>
            <person name="Isogai T."/>
            <person name="Sugano S."/>
        </authorList>
    </citation>
    <scope>NUCLEOTIDE SEQUENCE [LARGE SCALE MRNA]</scope>
    <source>
        <tissue>Cerebellum</tissue>
    </source>
</reference>
<reference key="5">
    <citation type="journal article" date="2002" name="FEBS Lett.">
        <title>Identification of G protein-coupled receptor genes from the human genome sequence.</title>
        <authorList>
            <person name="Takeda S."/>
            <person name="Kadowaki S."/>
            <person name="Haga T."/>
            <person name="Takaesu H."/>
            <person name="Mitaku S."/>
        </authorList>
    </citation>
    <scope>NUCLEOTIDE SEQUENCE [LARGE SCALE GENOMIC DNA]</scope>
</reference>
<reference key="6">
    <citation type="submission" date="2005-07" db="EMBL/GenBank/DDBJ databases">
        <authorList>
            <person name="Mural R.J."/>
            <person name="Istrail S."/>
            <person name="Sutton G.G."/>
            <person name="Florea L."/>
            <person name="Halpern A.L."/>
            <person name="Mobarry C.M."/>
            <person name="Lippert R."/>
            <person name="Walenz B."/>
            <person name="Shatkay H."/>
            <person name="Dew I."/>
            <person name="Miller J.R."/>
            <person name="Flanigan M.J."/>
            <person name="Edwards N.J."/>
            <person name="Bolanos R."/>
            <person name="Fasulo D."/>
            <person name="Halldorsson B.V."/>
            <person name="Hannenhalli S."/>
            <person name="Turner R."/>
            <person name="Yooseph S."/>
            <person name="Lu F."/>
            <person name="Nusskern D.R."/>
            <person name="Shue B.C."/>
            <person name="Zheng X.H."/>
            <person name="Zhong F."/>
            <person name="Delcher A.L."/>
            <person name="Huson D.H."/>
            <person name="Kravitz S.A."/>
            <person name="Mouchard L."/>
            <person name="Reinert K."/>
            <person name="Remington K.A."/>
            <person name="Clark A.G."/>
            <person name="Waterman M.S."/>
            <person name="Eichler E.E."/>
            <person name="Adams M.D."/>
            <person name="Hunkapiller M.W."/>
            <person name="Myers E.W."/>
            <person name="Venter J.C."/>
        </authorList>
    </citation>
    <scope>NUCLEOTIDE SEQUENCE [LARGE SCALE GENOMIC DNA]</scope>
</reference>
<reference key="7">
    <citation type="journal article" date="2004" name="Genome Res.">
        <title>The status, quality, and expansion of the NIH full-length cDNA project: the Mammalian Gene Collection (MGC).</title>
        <authorList>
            <consortium name="The MGC Project Team"/>
        </authorList>
    </citation>
    <scope>NUCLEOTIDE SEQUENCE [LARGE SCALE MRNA]</scope>
</reference>
<comment type="function">
    <text>Putative pheromone receptor.</text>
</comment>
<comment type="subcellular location">
    <subcellularLocation>
        <location>Cell membrane</location>
        <topology>Multi-pass membrane protein</topology>
    </subcellularLocation>
</comment>
<comment type="tissue specificity">
    <text evidence="3">Expressed in the olfactory mucosa, very low expression in brain, lung and kidney.</text>
</comment>
<comment type="miscellaneous">
    <text>The chimpanzee and orangutan orthologous proteins do not exist, their genes are pseudogenes.</text>
</comment>
<comment type="similarity">
    <text evidence="2">Belongs to the G-protein coupled receptor 1 family.</text>
</comment>
<comment type="online information" name="Protein Spotlight">
    <link uri="https://www.proteinspotlight.org/back_issues/061"/>
    <text>No one nose - Issue 61 of August 2005</text>
</comment>
<dbReference type="EMBL" id="AF255342">
    <property type="protein sequence ID" value="AAG10698.1"/>
    <property type="molecule type" value="mRNA"/>
</dbReference>
<dbReference type="EMBL" id="AF302903">
    <property type="protein sequence ID" value="AAG22545.1"/>
    <property type="molecule type" value="mRNA"/>
</dbReference>
<dbReference type="EMBL" id="AY312477">
    <property type="protein sequence ID" value="AAP85612.1"/>
    <property type="molecule type" value="Genomic_DNA"/>
</dbReference>
<dbReference type="EMBL" id="AY312478">
    <property type="protein sequence ID" value="AAP85613.1"/>
    <property type="molecule type" value="Genomic_DNA"/>
</dbReference>
<dbReference type="EMBL" id="AY312479">
    <property type="protein sequence ID" value="AAP85614.1"/>
    <property type="molecule type" value="Genomic_DNA"/>
</dbReference>
<dbReference type="EMBL" id="AK094452">
    <property type="protein sequence ID" value="BAG52867.1"/>
    <property type="molecule type" value="mRNA"/>
</dbReference>
<dbReference type="EMBL" id="AB083606">
    <property type="protein sequence ID" value="BAB89319.1"/>
    <property type="molecule type" value="Genomic_DNA"/>
</dbReference>
<dbReference type="EMBL" id="CH471135">
    <property type="protein sequence ID" value="EAW72503.1"/>
    <property type="molecule type" value="Genomic_DNA"/>
</dbReference>
<dbReference type="EMBL" id="BC095508">
    <property type="protein sequence ID" value="AAH95508.1"/>
    <property type="molecule type" value="mRNA"/>
</dbReference>
<dbReference type="CCDS" id="CCDS12951.1"/>
<dbReference type="RefSeq" id="NP_065684.1">
    <property type="nucleotide sequence ID" value="NM_020633.4"/>
</dbReference>
<dbReference type="SMR" id="Q9GZP7"/>
<dbReference type="BioGRID" id="121440">
    <property type="interactions" value="3"/>
</dbReference>
<dbReference type="FunCoup" id="Q9GZP7">
    <property type="interactions" value="3"/>
</dbReference>
<dbReference type="IntAct" id="Q9GZP7">
    <property type="interactions" value="3"/>
</dbReference>
<dbReference type="STRING" id="9606.ENSP00000322339"/>
<dbReference type="TCDB" id="9.A.14.12.1">
    <property type="family name" value="the g-protein-coupled receptor (gpcr) family"/>
</dbReference>
<dbReference type="GlyCosmos" id="Q9GZP7">
    <property type="glycosylation" value="2 sites, No reported glycans"/>
</dbReference>
<dbReference type="GlyGen" id="Q9GZP7">
    <property type="glycosylation" value="2 sites"/>
</dbReference>
<dbReference type="iPTMnet" id="Q9GZP7"/>
<dbReference type="PhosphoSitePlus" id="Q9GZP7"/>
<dbReference type="BioMuta" id="VN1R1"/>
<dbReference type="DMDM" id="71153399"/>
<dbReference type="MassIVE" id="Q9GZP7"/>
<dbReference type="PaxDb" id="9606-ENSP00000322339"/>
<dbReference type="Antibodypedia" id="19649">
    <property type="antibodies" value="177 antibodies from 25 providers"/>
</dbReference>
<dbReference type="DNASU" id="57191"/>
<dbReference type="Ensembl" id="ENST00000321039.5">
    <property type="protein sequence ID" value="ENSP00000322339.3"/>
    <property type="gene ID" value="ENSG00000178201.5"/>
</dbReference>
<dbReference type="GeneID" id="57191"/>
<dbReference type="KEGG" id="hsa:57191"/>
<dbReference type="MANE-Select" id="ENST00000321039.5">
    <property type="protein sequence ID" value="ENSP00000322339.3"/>
    <property type="RefSeq nucleotide sequence ID" value="NM_020633.4"/>
    <property type="RefSeq protein sequence ID" value="NP_065684.1"/>
</dbReference>
<dbReference type="UCSC" id="uc002qos.3">
    <property type="organism name" value="human"/>
</dbReference>
<dbReference type="AGR" id="HGNC:13548"/>
<dbReference type="CTD" id="57191"/>
<dbReference type="DisGeNET" id="57191"/>
<dbReference type="GeneCards" id="VN1R1"/>
<dbReference type="HGNC" id="HGNC:13548">
    <property type="gene designation" value="VN1R1"/>
</dbReference>
<dbReference type="HPA" id="ENSG00000178201">
    <property type="expression patterns" value="Tissue enhanced (brain, retina)"/>
</dbReference>
<dbReference type="MIM" id="605234">
    <property type="type" value="gene"/>
</dbReference>
<dbReference type="neXtProt" id="NX_Q9GZP7"/>
<dbReference type="OpenTargets" id="ENSG00000178201"/>
<dbReference type="PharmGKB" id="PA134957891"/>
<dbReference type="VEuPathDB" id="HostDB:ENSG00000178201"/>
<dbReference type="eggNOG" id="ENOG502RD1P">
    <property type="taxonomic scope" value="Eukaryota"/>
</dbReference>
<dbReference type="GeneTree" id="ENSGT00960000186612"/>
<dbReference type="HOGENOM" id="CLU_058641_1_0_1"/>
<dbReference type="InParanoid" id="Q9GZP7"/>
<dbReference type="OMA" id="PSICRWM"/>
<dbReference type="OrthoDB" id="9606139at2759"/>
<dbReference type="PAN-GO" id="Q9GZP7">
    <property type="GO annotations" value="0 GO annotations based on evolutionary models"/>
</dbReference>
<dbReference type="PhylomeDB" id="Q9GZP7"/>
<dbReference type="PathwayCommons" id="Q9GZP7"/>
<dbReference type="SignaLink" id="Q9GZP7"/>
<dbReference type="BioGRID-ORCS" id="57191">
    <property type="hits" value="31 hits in 1150 CRISPR screens"/>
</dbReference>
<dbReference type="GeneWiki" id="VN1R1"/>
<dbReference type="GenomeRNAi" id="57191"/>
<dbReference type="Pharos" id="Q9GZP7">
    <property type="development level" value="Tbio"/>
</dbReference>
<dbReference type="PRO" id="PR:Q9GZP7"/>
<dbReference type="Proteomes" id="UP000005640">
    <property type="component" value="Chromosome 19"/>
</dbReference>
<dbReference type="RNAct" id="Q9GZP7">
    <property type="molecule type" value="protein"/>
</dbReference>
<dbReference type="Bgee" id="ENSG00000178201">
    <property type="expression patterns" value="Expressed in primordial germ cell in gonad and 102 other cell types or tissues"/>
</dbReference>
<dbReference type="GO" id="GO:0005886">
    <property type="term" value="C:plasma membrane"/>
    <property type="evidence" value="ECO:0007669"/>
    <property type="project" value="UniProtKB-SubCell"/>
</dbReference>
<dbReference type="GO" id="GO:0016503">
    <property type="term" value="F:pheromone receptor activity"/>
    <property type="evidence" value="ECO:0007669"/>
    <property type="project" value="InterPro"/>
</dbReference>
<dbReference type="GO" id="GO:0019236">
    <property type="term" value="P:response to pheromone"/>
    <property type="evidence" value="ECO:0007669"/>
    <property type="project" value="UniProtKB-KW"/>
</dbReference>
<dbReference type="GO" id="GO:0007606">
    <property type="term" value="P:sensory perception of chemical stimulus"/>
    <property type="evidence" value="ECO:0007669"/>
    <property type="project" value="UniProtKB-ARBA"/>
</dbReference>
<dbReference type="CDD" id="cd13949">
    <property type="entry name" value="7tm_V1R_pheromone"/>
    <property type="match status" value="1"/>
</dbReference>
<dbReference type="FunFam" id="1.20.1070.10:FF:000033">
    <property type="entry name" value="Vomeronasal type-1 receptor"/>
    <property type="match status" value="1"/>
</dbReference>
<dbReference type="Gene3D" id="1.20.1070.10">
    <property type="entry name" value="Rhodopsin 7-helix transmembrane proteins"/>
    <property type="match status" value="1"/>
</dbReference>
<dbReference type="InterPro" id="IPR017452">
    <property type="entry name" value="GPCR_Rhodpsn_7TM"/>
</dbReference>
<dbReference type="InterPro" id="IPR004072">
    <property type="entry name" value="Vmron_rcpt_1"/>
</dbReference>
<dbReference type="PANTHER" id="PTHR24062">
    <property type="entry name" value="VOMERONASAL TYPE-1 RECEPTOR"/>
    <property type="match status" value="1"/>
</dbReference>
<dbReference type="Pfam" id="PF03402">
    <property type="entry name" value="V1R"/>
    <property type="match status" value="1"/>
</dbReference>
<dbReference type="PRINTS" id="PR01534">
    <property type="entry name" value="VOMERONASL1R"/>
</dbReference>
<dbReference type="SUPFAM" id="SSF81321">
    <property type="entry name" value="Family A G protein-coupled receptor-like"/>
    <property type="match status" value="1"/>
</dbReference>
<dbReference type="PROSITE" id="PS50262">
    <property type="entry name" value="G_PROTEIN_RECEP_F1_2"/>
    <property type="match status" value="1"/>
</dbReference>
<gene>
    <name type="primary">VN1R1</name>
    <name type="synonym">V1RL1</name>
    <name type="synonym">VNR19I1</name>
</gene>
<accession>Q9GZP7</accession>
<accession>B3KSV5</accession>
<accession>Q7Z5H8</accession>
<accession>Q7Z5H9</accession>
<keyword id="KW-1003">Cell membrane</keyword>
<keyword id="KW-0297">G-protein coupled receptor</keyword>
<keyword id="KW-0325">Glycoprotein</keyword>
<keyword id="KW-0472">Membrane</keyword>
<keyword id="KW-0589">Pheromone response</keyword>
<keyword id="KW-0675">Receptor</keyword>
<keyword id="KW-1185">Reference proteome</keyword>
<keyword id="KW-0807">Transducer</keyword>
<keyword id="KW-0812">Transmembrane</keyword>
<keyword id="KW-1133">Transmembrane helix</keyword>
<name>VN1R1_HUMAN</name>
<feature type="chain" id="PRO_0000070213" description="Vomeronasal type-1 receptor 1">
    <location>
        <begin position="1"/>
        <end position="353"/>
    </location>
</feature>
<feature type="topological domain" description="Extracellular" evidence="1">
    <location>
        <begin position="1"/>
        <end position="56"/>
    </location>
</feature>
<feature type="transmembrane region" description="Helical; Name=1" evidence="1">
    <location>
        <begin position="57"/>
        <end position="77"/>
    </location>
</feature>
<feature type="topological domain" description="Cytoplasmic" evidence="1">
    <location>
        <begin position="78"/>
        <end position="84"/>
    </location>
</feature>
<feature type="transmembrane region" description="Helical; Name=2" evidence="1">
    <location>
        <begin position="85"/>
        <end position="105"/>
    </location>
</feature>
<feature type="topological domain" description="Extracellular" evidence="1">
    <location>
        <begin position="106"/>
        <end position="132"/>
    </location>
</feature>
<feature type="transmembrane region" description="Helical; Name=3" evidence="1">
    <location>
        <begin position="133"/>
        <end position="153"/>
    </location>
</feature>
<feature type="topological domain" description="Cytoplasmic" evidence="1">
    <location>
        <begin position="154"/>
        <end position="169"/>
    </location>
</feature>
<feature type="transmembrane region" description="Helical; Name=4" evidence="1">
    <location>
        <begin position="170"/>
        <end position="190"/>
    </location>
</feature>
<feature type="topological domain" description="Extracellular" evidence="1">
    <location>
        <begin position="191"/>
        <end position="226"/>
    </location>
</feature>
<feature type="transmembrane region" description="Helical; Name=5" evidence="1">
    <location>
        <begin position="227"/>
        <end position="247"/>
    </location>
</feature>
<feature type="topological domain" description="Cytoplasmic" evidence="1">
    <location>
        <begin position="248"/>
        <end position="274"/>
    </location>
</feature>
<feature type="transmembrane region" description="Helical; Name=6" evidence="1">
    <location>
        <begin position="275"/>
        <end position="295"/>
    </location>
</feature>
<feature type="topological domain" description="Extracellular" evidence="1">
    <location>
        <begin position="296"/>
        <end position="303"/>
    </location>
</feature>
<feature type="transmembrane region" description="Helical; Name=7" evidence="1">
    <location>
        <begin position="304"/>
        <end position="324"/>
    </location>
</feature>
<feature type="topological domain" description="Cytoplasmic" evidence="1">
    <location>
        <begin position="325"/>
        <end position="353"/>
    </location>
</feature>
<feature type="glycosylation site" description="N-linked (GlcNAc...) asparagine" evidence="1">
    <location>
        <position position="117"/>
    </location>
</feature>
<feature type="glycosylation site" description="N-linked (GlcNAc...) asparagine" evidence="1">
    <location>
        <position position="198"/>
    </location>
</feature>
<feature type="sequence variant" id="VAR_049452" description="In dbSNP:rs3746223.">
    <original>I</original>
    <variation>M</variation>
    <location>
        <position position="103"/>
    </location>
</feature>
<feature type="sequence variant" id="VAR_022795" description="In allele VN1R1*2; dbSNP:rs374900565." evidence="4">
    <original>I</original>
    <variation>T</variation>
    <location>
        <position position="139"/>
    </location>
</feature>
<feature type="sequence variant" id="VAR_022796" description="In allele VN1R1*3; dbSNP:rs28649880." evidence="3 4">
    <original>S</original>
    <variation>F</variation>
    <location>
        <position position="241"/>
    </location>
</feature>
<feature type="sequence variant" id="VAR_022797" description="In allele VN1R1*3; dbSNP:rs61744949." evidence="3 4">
    <original>A</original>
    <variation>D</variation>
    <location>
        <position position="269"/>
    </location>
</feature>
<proteinExistence type="evidence at transcript level"/>
<evidence type="ECO:0000255" key="1"/>
<evidence type="ECO:0000255" key="2">
    <source>
        <dbReference type="PROSITE-ProRule" id="PRU00521"/>
    </source>
</evidence>
<evidence type="ECO:0000269" key="3">
    <source>
    </source>
</evidence>
<evidence type="ECO:0000269" key="4">
    <source>
    </source>
</evidence>
<protein>
    <recommendedName>
        <fullName>Vomeronasal type-1 receptor 1</fullName>
    </recommendedName>
    <alternativeName>
        <fullName>G-protein coupled receptor GPCR24</fullName>
        <shortName>hGPCR24</shortName>
    </alternativeName>
    <alternativeName>
        <fullName>V1r-like receptor 1</fullName>
    </alternativeName>
    <alternativeName>
        <fullName>V3r-related gene protein</fullName>
    </alternativeName>
    <alternativeName>
        <fullName>Vomeronasal olfactory receptor chromosome 19 subtype I member 1</fullName>
    </alternativeName>
</protein>
<sequence length="353" mass="40021">MVGDTLKLLSPLMTRYFFLLFYSTDSSDLNENQHPLDFDEMAFGKVKSGISFLIQTGVGILGNSFLLCFYNLILFTGHKLRPTDLILSQLALANSMVLFFKGIPQTMAAFGLKYLLNDTGCKFVFYYHRVGTRVSLSTICLLNGFQAIKLNPSICRWMEIKIRSPRFIDFCCLLCWAPHVLMNASVLLLVNGPLNSKNSSAKNNYGYCSYKASKRFSSLHAVLYFSPDFMSLGFMVWASGSMVFFLYRHKQQVQHNHSNRLSCRPSQEARATHTIMVLVSSFFVFYSVHSFLTIWTTVVANPGQWIVTNSVLVASCFPARSPFVLIMSDTHISQFCFACRTRKTLFPNLVVMP</sequence>
<organism>
    <name type="scientific">Homo sapiens</name>
    <name type="common">Human</name>
    <dbReference type="NCBI Taxonomy" id="9606"/>
    <lineage>
        <taxon>Eukaryota</taxon>
        <taxon>Metazoa</taxon>
        <taxon>Chordata</taxon>
        <taxon>Craniata</taxon>
        <taxon>Vertebrata</taxon>
        <taxon>Euteleostomi</taxon>
        <taxon>Mammalia</taxon>
        <taxon>Eutheria</taxon>
        <taxon>Euarchontoglires</taxon>
        <taxon>Primates</taxon>
        <taxon>Haplorrhini</taxon>
        <taxon>Catarrhini</taxon>
        <taxon>Hominidae</taxon>
        <taxon>Homo</taxon>
    </lineage>
</organism>